<proteinExistence type="inferred from homology"/>
<dbReference type="EMBL" id="BK006537">
    <property type="protein sequence ID" value="DAA06485.1"/>
    <property type="molecule type" value="mRNA"/>
</dbReference>
<dbReference type="SMR" id="C0H693"/>
<dbReference type="GO" id="GO:0005576">
    <property type="term" value="C:extracellular region"/>
    <property type="evidence" value="ECO:0007669"/>
    <property type="project" value="UniProtKB-SubCell"/>
</dbReference>
<dbReference type="GO" id="GO:0042151">
    <property type="term" value="C:nematocyst"/>
    <property type="evidence" value="ECO:0007669"/>
    <property type="project" value="UniProtKB-SubCell"/>
</dbReference>
<dbReference type="GO" id="GO:0090729">
    <property type="term" value="F:toxin activity"/>
    <property type="evidence" value="ECO:0007669"/>
    <property type="project" value="UniProtKB-KW"/>
</dbReference>
<dbReference type="PROSITE" id="PS51345">
    <property type="entry name" value="MYOTOXINS_2"/>
    <property type="match status" value="1"/>
</dbReference>
<sequence length="81" mass="8919">MGVHFNICLLLLLVATISSQTLKATEKDDSTDENPFGIYRRGSQCAVYGGRCIPTSVRCPPNTFQCDLSGCSWSERCCCHL</sequence>
<feature type="signal peptide" evidence="3">
    <location>
        <begin position="1"/>
        <end position="19"/>
    </location>
</feature>
<feature type="propeptide" id="PRO_0000434277" evidence="6">
    <location>
        <begin position="20"/>
        <end position="39"/>
    </location>
</feature>
<feature type="chain" id="PRO_0000434278" description="Small cysteine-rich protein 1 1">
    <location>
        <begin position="42"/>
        <end position="81"/>
    </location>
</feature>
<comment type="function">
    <text evidence="1 2 6">Induces neurotoxic symptoms on zebrafish (By similarity). Has also been claimed to be implied in calcification, but tests on homolog proteins suggest that proteins of this family have a neurotoxic function and not a calcification function (PubMed:19283069).</text>
</comment>
<comment type="subcellular location">
    <subcellularLocation>
        <location>Secreted</location>
    </subcellularLocation>
    <subcellularLocation>
        <location evidence="5">Nematocyst</location>
    </subcellularLocation>
</comment>
<comment type="PTM">
    <text evidence="5">The basic myotoxic domain of rattlesnake crotamine toxins (with 6 Cys residues) has been detected in this protein. However, this protein contains 2 additional Cys at the C-terminal region. Hence, this protein may contain 4 disulfide bonds instead of the 3 suggested by the myotoxin domain.</text>
</comment>
<comment type="similarity">
    <text evidence="7">Belongs to the Cnidaria small cysteine-rich protein (SCRiP) family. alpha subfamily.</text>
</comment>
<accession>C0H693</accession>
<evidence type="ECO:0000250" key="1">
    <source>
        <dbReference type="UniProtKB" id="C0H691"/>
    </source>
</evidence>
<evidence type="ECO:0000250" key="2">
    <source>
        <dbReference type="UniProtKB" id="C0H692"/>
    </source>
</evidence>
<evidence type="ECO:0000255" key="3"/>
<evidence type="ECO:0000303" key="4">
    <source>
    </source>
</evidence>
<evidence type="ECO:0000305" key="5"/>
<evidence type="ECO:0000305" key="6">
    <source>
    </source>
</evidence>
<evidence type="ECO:0000305" key="7">
    <source>
    </source>
</evidence>
<name>SCR1A_MONCP</name>
<organism>
    <name type="scientific">Montipora capitata</name>
    <name type="common">Rice coral</name>
    <dbReference type="NCBI Taxonomy" id="46704"/>
    <lineage>
        <taxon>Eukaryota</taxon>
        <taxon>Metazoa</taxon>
        <taxon>Cnidaria</taxon>
        <taxon>Anthozoa</taxon>
        <taxon>Hexacorallia</taxon>
        <taxon>Scleractinia</taxon>
        <taxon>Astrocoeniina</taxon>
        <taxon>Acroporidae</taxon>
        <taxon>Montipora</taxon>
    </lineage>
</organism>
<reference key="1">
    <citation type="journal article" date="2009" name="PLoS ONE">
        <title>Identification and gene expression analysis of a taxonomically restricted cysteine-rich protein family in reef-building corals.</title>
        <authorList>
            <person name="Sunagawa S."/>
            <person name="DeSalvo M.K."/>
            <person name="Voolstra C.R."/>
            <person name="Reyes-Bermudez A."/>
            <person name="Medina M."/>
        </authorList>
    </citation>
    <scope>NUCLEOTIDE SEQUENCE [MRNA]</scope>
</reference>
<reference key="2">
    <citation type="journal article" date="2024" name="Toxins">
        <title>Evolutionary analysis of cnidaria small cysteine-rich proteins (scrips), an enigmatic neurotoxin family from stony corals and sea anemones (Anthozoa: Hexacorallia).</title>
        <authorList>
            <person name="Barroso R.A."/>
            <person name="Ramos L."/>
            <person name="Moreno H."/>
            <person name="Antunes A."/>
        </authorList>
    </citation>
    <scope>NOMENCLATURE</scope>
</reference>
<protein>
    <recommendedName>
        <fullName evidence="4">Small cysteine-rich protein 1 1</fullName>
        <shortName evidence="4">Mcap-SCRiP1a</shortName>
        <shortName evidence="4">SCRiP1a</shortName>
    </recommendedName>
</protein>
<keyword id="KW-0165">Cleavage on pair of basic residues</keyword>
<keyword id="KW-1015">Disulfide bond</keyword>
<keyword id="KW-0166">Nematocyst</keyword>
<keyword id="KW-0528">Neurotoxin</keyword>
<keyword id="KW-0964">Secreted</keyword>
<keyword id="KW-0732">Signal</keyword>
<keyword id="KW-0800">Toxin</keyword>